<feature type="signal peptide" evidence="2">
    <location>
        <begin position="1"/>
        <end position="25"/>
    </location>
</feature>
<feature type="chain" id="PRO_0000295072" description="Cysteine-rich receptor-like protein kinase 25">
    <location>
        <begin position="26"/>
        <end position="675"/>
    </location>
</feature>
<feature type="topological domain" description="Extracellular" evidence="2">
    <location>
        <begin position="26"/>
        <end position="281"/>
    </location>
</feature>
<feature type="transmembrane region" description="Helical" evidence="2">
    <location>
        <begin position="282"/>
        <end position="302"/>
    </location>
</feature>
<feature type="topological domain" description="Cytoplasmic" evidence="2">
    <location>
        <begin position="303"/>
        <end position="675"/>
    </location>
</feature>
<feature type="domain" description="Gnk2-homologous 1" evidence="4">
    <location>
        <begin position="28"/>
        <end position="134"/>
    </location>
</feature>
<feature type="domain" description="Gnk2-homologous 2" evidence="4">
    <location>
        <begin position="140"/>
        <end position="247"/>
    </location>
</feature>
<feature type="domain" description="Protein kinase" evidence="3">
    <location>
        <begin position="347"/>
        <end position="622"/>
    </location>
</feature>
<feature type="region of interest" description="Disordered" evidence="6">
    <location>
        <begin position="638"/>
        <end position="661"/>
    </location>
</feature>
<feature type="compositionally biased region" description="Polar residues" evidence="6">
    <location>
        <begin position="648"/>
        <end position="661"/>
    </location>
</feature>
<feature type="active site" description="Proton acceptor" evidence="3 5">
    <location>
        <position position="472"/>
    </location>
</feature>
<feature type="binding site" evidence="3">
    <location>
        <begin position="353"/>
        <end position="361"/>
    </location>
    <ligand>
        <name>ATP</name>
        <dbReference type="ChEBI" id="CHEBI:30616"/>
    </ligand>
</feature>
<feature type="binding site" evidence="3">
    <location>
        <position position="375"/>
    </location>
    <ligand>
        <name>ATP</name>
        <dbReference type="ChEBI" id="CHEBI:30616"/>
    </ligand>
</feature>
<feature type="modified residue" description="Phosphotyrosine" evidence="1">
    <location>
        <position position="420"/>
    </location>
</feature>
<feature type="modified residue" description="Phosphoserine" evidence="1">
    <location>
        <position position="476"/>
    </location>
</feature>
<feature type="modified residue" description="Phosphothreonine" evidence="1">
    <location>
        <position position="512"/>
    </location>
</feature>
<feature type="modified residue" description="Phosphotyrosine" evidence="1">
    <location>
        <position position="520"/>
    </location>
</feature>
<feature type="glycosylation site" description="N-linked (GlcNAc...) asparagine" evidence="2">
    <location>
        <position position="36"/>
    </location>
</feature>
<feature type="glycosylation site" description="N-linked (GlcNAc...) asparagine" evidence="2">
    <location>
        <position position="43"/>
    </location>
</feature>
<feature type="glycosylation site" description="N-linked (GlcNAc...) asparagine" evidence="2">
    <location>
        <position position="77"/>
    </location>
</feature>
<feature type="glycosylation site" description="N-linked (GlcNAc...) asparagine" evidence="2">
    <location>
        <position position="106"/>
    </location>
</feature>
<feature type="glycosylation site" description="N-linked (GlcNAc...) asparagine" evidence="2">
    <location>
        <position position="131"/>
    </location>
</feature>
<feature type="glycosylation site" description="N-linked (GlcNAc...) asparagine" evidence="2">
    <location>
        <position position="151"/>
    </location>
</feature>
<feature type="glycosylation site" description="N-linked (GlcNAc...) asparagine" evidence="2">
    <location>
        <position position="161"/>
    </location>
</feature>
<feature type="glycosylation site" description="N-linked (GlcNAc...) asparagine" evidence="2">
    <location>
        <position position="188"/>
    </location>
</feature>
<feature type="glycosylation site" description="N-linked (GlcNAc...) asparagine" evidence="2">
    <location>
        <position position="249"/>
    </location>
</feature>
<feature type="glycosylation site" description="N-linked (GlcNAc...) asparagine" evidence="2">
    <location>
        <position position="281"/>
    </location>
</feature>
<evidence type="ECO:0000250" key="1">
    <source>
        <dbReference type="UniProtKB" id="O48814"/>
    </source>
</evidence>
<evidence type="ECO:0000255" key="2"/>
<evidence type="ECO:0000255" key="3">
    <source>
        <dbReference type="PROSITE-ProRule" id="PRU00159"/>
    </source>
</evidence>
<evidence type="ECO:0000255" key="4">
    <source>
        <dbReference type="PROSITE-ProRule" id="PRU00806"/>
    </source>
</evidence>
<evidence type="ECO:0000255" key="5">
    <source>
        <dbReference type="PROSITE-ProRule" id="PRU10027"/>
    </source>
</evidence>
<evidence type="ECO:0000256" key="6">
    <source>
        <dbReference type="SAM" id="MobiDB-lite"/>
    </source>
</evidence>
<evidence type="ECO:0000305" key="7"/>
<dbReference type="EC" id="2.7.11.-"/>
<dbReference type="EMBL" id="AC012477">
    <property type="status" value="NOT_ANNOTATED_CDS"/>
    <property type="molecule type" value="Genomic_DNA"/>
</dbReference>
<dbReference type="EMBL" id="AL161503">
    <property type="protein sequence ID" value="CAB81062.1"/>
    <property type="molecule type" value="Genomic_DNA"/>
</dbReference>
<dbReference type="EMBL" id="CP002687">
    <property type="protein sequence ID" value="AEE82490.1"/>
    <property type="molecule type" value="Genomic_DNA"/>
</dbReference>
<dbReference type="PIR" id="D85065">
    <property type="entry name" value="D85065"/>
</dbReference>
<dbReference type="RefSeq" id="NP_192429.1">
    <property type="nucleotide sequence ID" value="NM_116759.3"/>
</dbReference>
<dbReference type="SMR" id="Q9M0X5"/>
<dbReference type="STRING" id="3702.Q9M0X5"/>
<dbReference type="GlyCosmos" id="Q9M0X5">
    <property type="glycosylation" value="10 sites, No reported glycans"/>
</dbReference>
<dbReference type="GlyGen" id="Q9M0X5">
    <property type="glycosylation" value="10 sites"/>
</dbReference>
<dbReference type="PaxDb" id="3702-AT4G05200.1"/>
<dbReference type="ProteomicsDB" id="224528"/>
<dbReference type="EnsemblPlants" id="AT4G05200.1">
    <property type="protein sequence ID" value="AT4G05200.1"/>
    <property type="gene ID" value="AT4G05200"/>
</dbReference>
<dbReference type="GeneID" id="825868"/>
<dbReference type="Gramene" id="AT4G05200.1">
    <property type="protein sequence ID" value="AT4G05200.1"/>
    <property type="gene ID" value="AT4G05200"/>
</dbReference>
<dbReference type="KEGG" id="ath:AT4G05200"/>
<dbReference type="Araport" id="AT4G05200"/>
<dbReference type="TAIR" id="AT4G05200">
    <property type="gene designation" value="CRK25"/>
</dbReference>
<dbReference type="eggNOG" id="ENOG502QWDY">
    <property type="taxonomic scope" value="Eukaryota"/>
</dbReference>
<dbReference type="HOGENOM" id="CLU_000288_35_2_1"/>
<dbReference type="InParanoid" id="Q9M0X5"/>
<dbReference type="PhylomeDB" id="Q9M0X5"/>
<dbReference type="PRO" id="PR:Q9M0X5"/>
<dbReference type="Proteomes" id="UP000006548">
    <property type="component" value="Chromosome 4"/>
</dbReference>
<dbReference type="ExpressionAtlas" id="Q9M0X5">
    <property type="expression patterns" value="baseline and differential"/>
</dbReference>
<dbReference type="GO" id="GO:0016020">
    <property type="term" value="C:membrane"/>
    <property type="evidence" value="ECO:0007669"/>
    <property type="project" value="UniProtKB-SubCell"/>
</dbReference>
<dbReference type="GO" id="GO:0005524">
    <property type="term" value="F:ATP binding"/>
    <property type="evidence" value="ECO:0007669"/>
    <property type="project" value="UniProtKB-KW"/>
</dbReference>
<dbReference type="GO" id="GO:0106310">
    <property type="term" value="F:protein serine kinase activity"/>
    <property type="evidence" value="ECO:0007669"/>
    <property type="project" value="RHEA"/>
</dbReference>
<dbReference type="GO" id="GO:0004674">
    <property type="term" value="F:protein serine/threonine kinase activity"/>
    <property type="evidence" value="ECO:0007669"/>
    <property type="project" value="UniProtKB-KW"/>
</dbReference>
<dbReference type="CDD" id="cd23509">
    <property type="entry name" value="Gnk2-like"/>
    <property type="match status" value="2"/>
</dbReference>
<dbReference type="CDD" id="cd14066">
    <property type="entry name" value="STKc_IRAK"/>
    <property type="match status" value="1"/>
</dbReference>
<dbReference type="FunFam" id="3.30.200.20:FF:000142">
    <property type="entry name" value="Cysteine-rich receptor-like protein kinase 10"/>
    <property type="match status" value="1"/>
</dbReference>
<dbReference type="FunFam" id="3.30.430.20:FF:000002">
    <property type="entry name" value="Cysteine-rich receptor-like protein kinase 10"/>
    <property type="match status" value="1"/>
</dbReference>
<dbReference type="FunFam" id="1.10.510.10:FF:000129">
    <property type="entry name" value="cysteine-rich receptor-like protein kinase 10"/>
    <property type="match status" value="1"/>
</dbReference>
<dbReference type="FunFam" id="3.30.430.20:FF:000003">
    <property type="entry name" value="Cysteine-rich RLK (RECEPTOR-like protein kinase) 10"/>
    <property type="match status" value="1"/>
</dbReference>
<dbReference type="Gene3D" id="3.30.430.20">
    <property type="entry name" value="Gnk2 domain, C-X8-C-X2-C motif"/>
    <property type="match status" value="2"/>
</dbReference>
<dbReference type="Gene3D" id="3.30.200.20">
    <property type="entry name" value="Phosphorylase Kinase, domain 1"/>
    <property type="match status" value="1"/>
</dbReference>
<dbReference type="Gene3D" id="1.10.510.10">
    <property type="entry name" value="Transferase(Phosphotransferase) domain 1"/>
    <property type="match status" value="1"/>
</dbReference>
<dbReference type="InterPro" id="IPR002902">
    <property type="entry name" value="GNK2"/>
</dbReference>
<dbReference type="InterPro" id="IPR038408">
    <property type="entry name" value="GNK2_sf"/>
</dbReference>
<dbReference type="InterPro" id="IPR011009">
    <property type="entry name" value="Kinase-like_dom_sf"/>
</dbReference>
<dbReference type="InterPro" id="IPR000719">
    <property type="entry name" value="Prot_kinase_dom"/>
</dbReference>
<dbReference type="InterPro" id="IPR017441">
    <property type="entry name" value="Protein_kinase_ATP_BS"/>
</dbReference>
<dbReference type="InterPro" id="IPR001245">
    <property type="entry name" value="Ser-Thr/Tyr_kinase_cat_dom"/>
</dbReference>
<dbReference type="InterPro" id="IPR008271">
    <property type="entry name" value="Ser/Thr_kinase_AS"/>
</dbReference>
<dbReference type="PANTHER" id="PTHR27002:SF659">
    <property type="entry name" value="CYSTEINE-RICH RECEPTOR-LIKE PROTEIN KINASE 25"/>
    <property type="match status" value="1"/>
</dbReference>
<dbReference type="PANTHER" id="PTHR27002">
    <property type="entry name" value="RECEPTOR-LIKE SERINE/THREONINE-PROTEIN KINASE SD1-8"/>
    <property type="match status" value="1"/>
</dbReference>
<dbReference type="Pfam" id="PF07714">
    <property type="entry name" value="PK_Tyr_Ser-Thr"/>
    <property type="match status" value="1"/>
</dbReference>
<dbReference type="Pfam" id="PF01657">
    <property type="entry name" value="Stress-antifung"/>
    <property type="match status" value="2"/>
</dbReference>
<dbReference type="SMART" id="SM00220">
    <property type="entry name" value="S_TKc"/>
    <property type="match status" value="1"/>
</dbReference>
<dbReference type="SUPFAM" id="SSF56112">
    <property type="entry name" value="Protein kinase-like (PK-like)"/>
    <property type="match status" value="1"/>
</dbReference>
<dbReference type="PROSITE" id="PS51473">
    <property type="entry name" value="GNK2"/>
    <property type="match status" value="2"/>
</dbReference>
<dbReference type="PROSITE" id="PS00107">
    <property type="entry name" value="PROTEIN_KINASE_ATP"/>
    <property type="match status" value="1"/>
</dbReference>
<dbReference type="PROSITE" id="PS50011">
    <property type="entry name" value="PROTEIN_KINASE_DOM"/>
    <property type="match status" value="1"/>
</dbReference>
<dbReference type="PROSITE" id="PS00108">
    <property type="entry name" value="PROTEIN_KINASE_ST"/>
    <property type="match status" value="1"/>
</dbReference>
<name>CRK25_ARATH</name>
<reference key="1">
    <citation type="journal article" date="1999" name="Nature">
        <title>Sequence and analysis of chromosome 4 of the plant Arabidopsis thaliana.</title>
        <authorList>
            <person name="Mayer K.F.X."/>
            <person name="Schueller C."/>
            <person name="Wambutt R."/>
            <person name="Murphy G."/>
            <person name="Volckaert G."/>
            <person name="Pohl T."/>
            <person name="Duesterhoeft A."/>
            <person name="Stiekema W."/>
            <person name="Entian K.-D."/>
            <person name="Terryn N."/>
            <person name="Harris B."/>
            <person name="Ansorge W."/>
            <person name="Brandt P."/>
            <person name="Grivell L.A."/>
            <person name="Rieger M."/>
            <person name="Weichselgartner M."/>
            <person name="de Simone V."/>
            <person name="Obermaier B."/>
            <person name="Mache R."/>
            <person name="Mueller M."/>
            <person name="Kreis M."/>
            <person name="Delseny M."/>
            <person name="Puigdomenech P."/>
            <person name="Watson M."/>
            <person name="Schmidtheini T."/>
            <person name="Reichert B."/>
            <person name="Portetelle D."/>
            <person name="Perez-Alonso M."/>
            <person name="Boutry M."/>
            <person name="Bancroft I."/>
            <person name="Vos P."/>
            <person name="Hoheisel J."/>
            <person name="Zimmermann W."/>
            <person name="Wedler H."/>
            <person name="Ridley P."/>
            <person name="Langham S.-A."/>
            <person name="McCullagh B."/>
            <person name="Bilham L."/>
            <person name="Robben J."/>
            <person name="van der Schueren J."/>
            <person name="Grymonprez B."/>
            <person name="Chuang Y.-J."/>
            <person name="Vandenbussche F."/>
            <person name="Braeken M."/>
            <person name="Weltjens I."/>
            <person name="Voet M."/>
            <person name="Bastiaens I."/>
            <person name="Aert R."/>
            <person name="Defoor E."/>
            <person name="Weitzenegger T."/>
            <person name="Bothe G."/>
            <person name="Ramsperger U."/>
            <person name="Hilbert H."/>
            <person name="Braun M."/>
            <person name="Holzer E."/>
            <person name="Brandt A."/>
            <person name="Peters S."/>
            <person name="van Staveren M."/>
            <person name="Dirkse W."/>
            <person name="Mooijman P."/>
            <person name="Klein Lankhorst R."/>
            <person name="Rose M."/>
            <person name="Hauf J."/>
            <person name="Koetter P."/>
            <person name="Berneiser S."/>
            <person name="Hempel S."/>
            <person name="Feldpausch M."/>
            <person name="Lamberth S."/>
            <person name="Van den Daele H."/>
            <person name="De Keyser A."/>
            <person name="Buysshaert C."/>
            <person name="Gielen J."/>
            <person name="Villarroel R."/>
            <person name="De Clercq R."/>
            <person name="van Montagu M."/>
            <person name="Rogers J."/>
            <person name="Cronin A."/>
            <person name="Quail M.A."/>
            <person name="Bray-Allen S."/>
            <person name="Clark L."/>
            <person name="Doggett J."/>
            <person name="Hall S."/>
            <person name="Kay M."/>
            <person name="Lennard N."/>
            <person name="McLay K."/>
            <person name="Mayes R."/>
            <person name="Pettett A."/>
            <person name="Rajandream M.A."/>
            <person name="Lyne M."/>
            <person name="Benes V."/>
            <person name="Rechmann S."/>
            <person name="Borkova D."/>
            <person name="Bloecker H."/>
            <person name="Scharfe M."/>
            <person name="Grimm M."/>
            <person name="Loehnert T.-H."/>
            <person name="Dose S."/>
            <person name="de Haan M."/>
            <person name="Maarse A.C."/>
            <person name="Schaefer M."/>
            <person name="Mueller-Auer S."/>
            <person name="Gabel C."/>
            <person name="Fuchs M."/>
            <person name="Fartmann B."/>
            <person name="Granderath K."/>
            <person name="Dauner D."/>
            <person name="Herzl A."/>
            <person name="Neumann S."/>
            <person name="Argiriou A."/>
            <person name="Vitale D."/>
            <person name="Liguori R."/>
            <person name="Piravandi E."/>
            <person name="Massenet O."/>
            <person name="Quigley F."/>
            <person name="Clabauld G."/>
            <person name="Muendlein A."/>
            <person name="Felber R."/>
            <person name="Schnabl S."/>
            <person name="Hiller R."/>
            <person name="Schmidt W."/>
            <person name="Lecharny A."/>
            <person name="Aubourg S."/>
            <person name="Chefdor F."/>
            <person name="Cooke R."/>
            <person name="Berger C."/>
            <person name="Monfort A."/>
            <person name="Casacuberta E."/>
            <person name="Gibbons T."/>
            <person name="Weber N."/>
            <person name="Vandenbol M."/>
            <person name="Bargues M."/>
            <person name="Terol J."/>
            <person name="Torres A."/>
            <person name="Perez-Perez A."/>
            <person name="Purnelle B."/>
            <person name="Bent E."/>
            <person name="Johnson S."/>
            <person name="Tacon D."/>
            <person name="Jesse T."/>
            <person name="Heijnen L."/>
            <person name="Schwarz S."/>
            <person name="Scholler P."/>
            <person name="Heber S."/>
            <person name="Francs P."/>
            <person name="Bielke C."/>
            <person name="Frishman D."/>
            <person name="Haase D."/>
            <person name="Lemcke K."/>
            <person name="Mewes H.-W."/>
            <person name="Stocker S."/>
            <person name="Zaccaria P."/>
            <person name="Bevan M."/>
            <person name="Wilson R.K."/>
            <person name="de la Bastide M."/>
            <person name="Habermann K."/>
            <person name="Parnell L."/>
            <person name="Dedhia N."/>
            <person name="Gnoj L."/>
            <person name="Schutz K."/>
            <person name="Huang E."/>
            <person name="Spiegel L."/>
            <person name="Sekhon M."/>
            <person name="Murray J."/>
            <person name="Sheet P."/>
            <person name="Cordes M."/>
            <person name="Abu-Threideh J."/>
            <person name="Stoneking T."/>
            <person name="Kalicki J."/>
            <person name="Graves T."/>
            <person name="Harmon G."/>
            <person name="Edwards J."/>
            <person name="Latreille P."/>
            <person name="Courtney L."/>
            <person name="Cloud J."/>
            <person name="Abbott A."/>
            <person name="Scott K."/>
            <person name="Johnson D."/>
            <person name="Minx P."/>
            <person name="Bentley D."/>
            <person name="Fulton B."/>
            <person name="Miller N."/>
            <person name="Greco T."/>
            <person name="Kemp K."/>
            <person name="Kramer J."/>
            <person name="Fulton L."/>
            <person name="Mardis E."/>
            <person name="Dante M."/>
            <person name="Pepin K."/>
            <person name="Hillier L.W."/>
            <person name="Nelson J."/>
            <person name="Spieth J."/>
            <person name="Ryan E."/>
            <person name="Andrews S."/>
            <person name="Geisel C."/>
            <person name="Layman D."/>
            <person name="Du H."/>
            <person name="Ali J."/>
            <person name="Berghoff A."/>
            <person name="Jones K."/>
            <person name="Drone K."/>
            <person name="Cotton M."/>
            <person name="Joshu C."/>
            <person name="Antonoiu B."/>
            <person name="Zidanic M."/>
            <person name="Strong C."/>
            <person name="Sun H."/>
            <person name="Lamar B."/>
            <person name="Yordan C."/>
            <person name="Ma P."/>
            <person name="Zhong J."/>
            <person name="Preston R."/>
            <person name="Vil D."/>
            <person name="Shekher M."/>
            <person name="Matero A."/>
            <person name="Shah R."/>
            <person name="Swaby I.K."/>
            <person name="O'Shaughnessy A."/>
            <person name="Rodriguez M."/>
            <person name="Hoffman J."/>
            <person name="Till S."/>
            <person name="Granat S."/>
            <person name="Shohdy N."/>
            <person name="Hasegawa A."/>
            <person name="Hameed A."/>
            <person name="Lodhi M."/>
            <person name="Johnson A."/>
            <person name="Chen E."/>
            <person name="Marra M.A."/>
            <person name="Martienssen R."/>
            <person name="McCombie W.R."/>
        </authorList>
    </citation>
    <scope>NUCLEOTIDE SEQUENCE [LARGE SCALE GENOMIC DNA]</scope>
    <source>
        <strain>cv. Columbia</strain>
    </source>
</reference>
<reference key="2">
    <citation type="journal article" date="2017" name="Plant J.">
        <title>Araport11: a complete reannotation of the Arabidopsis thaliana reference genome.</title>
        <authorList>
            <person name="Cheng C.Y."/>
            <person name="Krishnakumar V."/>
            <person name="Chan A.P."/>
            <person name="Thibaud-Nissen F."/>
            <person name="Schobel S."/>
            <person name="Town C.D."/>
        </authorList>
    </citation>
    <scope>GENOME REANNOTATION</scope>
    <source>
        <strain>cv. Columbia</strain>
    </source>
</reference>
<reference key="3">
    <citation type="journal article" date="2001" name="Plant Physiol.">
        <title>A superfamily of proteins with novel cysteine-rich repeats.</title>
        <authorList>
            <person name="Chen Z."/>
        </authorList>
    </citation>
    <scope>GENE FAMILY ORGANIZATION</scope>
    <scope>NOMENCLATURE</scope>
</reference>
<proteinExistence type="inferred from homology"/>
<organism>
    <name type="scientific">Arabidopsis thaliana</name>
    <name type="common">Mouse-ear cress</name>
    <dbReference type="NCBI Taxonomy" id="3702"/>
    <lineage>
        <taxon>Eukaryota</taxon>
        <taxon>Viridiplantae</taxon>
        <taxon>Streptophyta</taxon>
        <taxon>Embryophyta</taxon>
        <taxon>Tracheophyta</taxon>
        <taxon>Spermatophyta</taxon>
        <taxon>Magnoliopsida</taxon>
        <taxon>eudicotyledons</taxon>
        <taxon>Gunneridae</taxon>
        <taxon>Pentapetalae</taxon>
        <taxon>rosids</taxon>
        <taxon>malvids</taxon>
        <taxon>Brassicales</taxon>
        <taxon>Brassicaceae</taxon>
        <taxon>Camelineae</taxon>
        <taxon>Arabidopsis</taxon>
    </lineage>
</organism>
<protein>
    <recommendedName>
        <fullName>Cysteine-rich receptor-like protein kinase 25</fullName>
        <shortName>Cysteine-rich RLK25</shortName>
        <ecNumber>2.7.11.-</ecNumber>
    </recommendedName>
</protein>
<accession>Q9M0X5</accession>
<sequence length="675" mass="75349">MSSCFKSSVSLFSVFLFMILKTVTSDPTYLYHICPNTTTYSRNSSYLTNLRTVLSSLSSPNAAYASLFDNAAAGEENDSNRVYGVFLCRGDVSAEICRDCVAFAANETLQRCPREKVAVIWYDECMVRYSNQSIVGQMRIRPGVFLTNKQNITENQVSRFNESLPALLIDVAVKAALSSRKFATEKANFTVFQTIYSLVQCTPDLTNQDCESCLRQVINYLPRCCDRSVGGRVIAPSCSFRYELYPFYNETIAAAPMAPPPSSTVTAPPLNIPSEKGKGKNLTVIVTAIAVPVSVCVLLLGAMCWLLARRRNNKLSAETEDLDEDGITSTETLQFQFSAIEAATNKFSESNKLGHGGFGEVYKGQLITGETVAIKRLSQGSTQGAEEFKNEVDVVAKLQHRNLAKLLGYCLDGEEKILVYEFVPNKSLDYFLFDNEKRRVLDWQRRYKIIEGIARGILYLHRDSRLTIIHRDLKASNILLDADMHPKISDFGMARIFGVDQTQANTKRIVGTYGYMSPEYAIHGKYSVKSDVYSFGVLVLELITGKKNSSFYEEDGLGDLVTYVWKLWVENSPLELVDEAMRGNFQTNEVIRCIHIALLCVQEDSSERPSMDDILVMMNSFTVTLPIPKRSGFLLRTMKDSRDPRSGGSASDHSATSKSLPLSVDDSSITIVYPR</sequence>
<keyword id="KW-0067">ATP-binding</keyword>
<keyword id="KW-0325">Glycoprotein</keyword>
<keyword id="KW-0418">Kinase</keyword>
<keyword id="KW-0472">Membrane</keyword>
<keyword id="KW-0547">Nucleotide-binding</keyword>
<keyword id="KW-0597">Phosphoprotein</keyword>
<keyword id="KW-0675">Receptor</keyword>
<keyword id="KW-1185">Reference proteome</keyword>
<keyword id="KW-0677">Repeat</keyword>
<keyword id="KW-0723">Serine/threonine-protein kinase</keyword>
<keyword id="KW-0732">Signal</keyword>
<keyword id="KW-0808">Transferase</keyword>
<keyword id="KW-0812">Transmembrane</keyword>
<keyword id="KW-1133">Transmembrane helix</keyword>
<comment type="catalytic activity">
    <reaction>
        <text>L-seryl-[protein] + ATP = O-phospho-L-seryl-[protein] + ADP + H(+)</text>
        <dbReference type="Rhea" id="RHEA:17989"/>
        <dbReference type="Rhea" id="RHEA-COMP:9863"/>
        <dbReference type="Rhea" id="RHEA-COMP:11604"/>
        <dbReference type="ChEBI" id="CHEBI:15378"/>
        <dbReference type="ChEBI" id="CHEBI:29999"/>
        <dbReference type="ChEBI" id="CHEBI:30616"/>
        <dbReference type="ChEBI" id="CHEBI:83421"/>
        <dbReference type="ChEBI" id="CHEBI:456216"/>
    </reaction>
</comment>
<comment type="catalytic activity">
    <reaction>
        <text>L-threonyl-[protein] + ATP = O-phospho-L-threonyl-[protein] + ADP + H(+)</text>
        <dbReference type="Rhea" id="RHEA:46608"/>
        <dbReference type="Rhea" id="RHEA-COMP:11060"/>
        <dbReference type="Rhea" id="RHEA-COMP:11605"/>
        <dbReference type="ChEBI" id="CHEBI:15378"/>
        <dbReference type="ChEBI" id="CHEBI:30013"/>
        <dbReference type="ChEBI" id="CHEBI:30616"/>
        <dbReference type="ChEBI" id="CHEBI:61977"/>
        <dbReference type="ChEBI" id="CHEBI:456216"/>
    </reaction>
</comment>
<comment type="subcellular location">
    <subcellularLocation>
        <location evidence="7">Membrane</location>
        <topology evidence="7">Single-pass membrane protein</topology>
    </subcellularLocation>
</comment>
<comment type="similarity">
    <text evidence="3">Belongs to the protein kinase superfamily. Ser/Thr protein kinase family. CRK subfamily.</text>
</comment>
<gene>
    <name type="primary">CRK25</name>
    <name type="ordered locus">At4g05200</name>
    <name type="ORF">C17L7.120</name>
    <name type="ORF">C6L9.3</name>
</gene>